<feature type="chain" id="PRO_0000288604" description="Kyphoscoliosis peptidase">
    <location>
        <begin position="1"/>
        <end position="661"/>
    </location>
</feature>
<feature type="region of interest" description="Disordered" evidence="3">
    <location>
        <begin position="28"/>
        <end position="47"/>
    </location>
</feature>
<feature type="region of interest" description="Disordered" evidence="3">
    <location>
        <begin position="115"/>
        <end position="136"/>
    </location>
</feature>
<feature type="compositionally biased region" description="Polar residues" evidence="3">
    <location>
        <begin position="28"/>
        <end position="41"/>
    </location>
</feature>
<feature type="active site" evidence="1">
    <location>
        <position position="225"/>
    </location>
</feature>
<feature type="active site" evidence="1">
    <location>
        <position position="267"/>
    </location>
</feature>
<feature type="active site" evidence="1">
    <location>
        <position position="282"/>
    </location>
</feature>
<feature type="splice variant" id="VSP_060754" description="In isoform 3.">
    <location>
        <begin position="67"/>
        <end position="87"/>
    </location>
</feature>
<feature type="sequence conflict" description="In Ref. 1; BAC03471." evidence="7" ref="1">
    <original>A</original>
    <variation>T</variation>
    <location>
        <position position="159"/>
    </location>
</feature>
<reference key="1">
    <citation type="journal article" date="2004" name="Nat. Genet.">
        <title>Complete sequencing and characterization of 21,243 full-length human cDNAs.</title>
        <authorList>
            <person name="Ota T."/>
            <person name="Suzuki Y."/>
            <person name="Nishikawa T."/>
            <person name="Otsuki T."/>
            <person name="Sugiyama T."/>
            <person name="Irie R."/>
            <person name="Wakamatsu A."/>
            <person name="Hayashi K."/>
            <person name="Sato H."/>
            <person name="Nagai K."/>
            <person name="Kimura K."/>
            <person name="Makita H."/>
            <person name="Sekine M."/>
            <person name="Obayashi M."/>
            <person name="Nishi T."/>
            <person name="Shibahara T."/>
            <person name="Tanaka T."/>
            <person name="Ishii S."/>
            <person name="Yamamoto J."/>
            <person name="Saito K."/>
            <person name="Kawai Y."/>
            <person name="Isono Y."/>
            <person name="Nakamura Y."/>
            <person name="Nagahari K."/>
            <person name="Murakami K."/>
            <person name="Yasuda T."/>
            <person name="Iwayanagi T."/>
            <person name="Wagatsuma M."/>
            <person name="Shiratori A."/>
            <person name="Sudo H."/>
            <person name="Hosoiri T."/>
            <person name="Kaku Y."/>
            <person name="Kodaira H."/>
            <person name="Kondo H."/>
            <person name="Sugawara M."/>
            <person name="Takahashi M."/>
            <person name="Kanda K."/>
            <person name="Yokoi T."/>
            <person name="Furuya T."/>
            <person name="Kikkawa E."/>
            <person name="Omura Y."/>
            <person name="Abe K."/>
            <person name="Kamihara K."/>
            <person name="Katsuta N."/>
            <person name="Sato K."/>
            <person name="Tanikawa M."/>
            <person name="Yamazaki M."/>
            <person name="Ninomiya K."/>
            <person name="Ishibashi T."/>
            <person name="Yamashita H."/>
            <person name="Murakawa K."/>
            <person name="Fujimori K."/>
            <person name="Tanai H."/>
            <person name="Kimata M."/>
            <person name="Watanabe M."/>
            <person name="Hiraoka S."/>
            <person name="Chiba Y."/>
            <person name="Ishida S."/>
            <person name="Ono Y."/>
            <person name="Takiguchi S."/>
            <person name="Watanabe S."/>
            <person name="Yosida M."/>
            <person name="Hotuta T."/>
            <person name="Kusano J."/>
            <person name="Kanehori K."/>
            <person name="Takahashi-Fujii A."/>
            <person name="Hara H."/>
            <person name="Tanase T.-O."/>
            <person name="Nomura Y."/>
            <person name="Togiya S."/>
            <person name="Komai F."/>
            <person name="Hara R."/>
            <person name="Takeuchi K."/>
            <person name="Arita M."/>
            <person name="Imose N."/>
            <person name="Musashino K."/>
            <person name="Yuuki H."/>
            <person name="Oshima A."/>
            <person name="Sasaki N."/>
            <person name="Aotsuka S."/>
            <person name="Yoshikawa Y."/>
            <person name="Matsunawa H."/>
            <person name="Ichihara T."/>
            <person name="Shiohata N."/>
            <person name="Sano S."/>
            <person name="Moriya S."/>
            <person name="Momiyama H."/>
            <person name="Satoh N."/>
            <person name="Takami S."/>
            <person name="Terashima Y."/>
            <person name="Suzuki O."/>
            <person name="Nakagawa S."/>
            <person name="Senoh A."/>
            <person name="Mizoguchi H."/>
            <person name="Goto Y."/>
            <person name="Shimizu F."/>
            <person name="Wakebe H."/>
            <person name="Hishigaki H."/>
            <person name="Watanabe T."/>
            <person name="Sugiyama A."/>
            <person name="Takemoto M."/>
            <person name="Kawakami B."/>
            <person name="Yamazaki M."/>
            <person name="Watanabe K."/>
            <person name="Kumagai A."/>
            <person name="Itakura S."/>
            <person name="Fukuzumi Y."/>
            <person name="Fujimori Y."/>
            <person name="Komiyama M."/>
            <person name="Tashiro H."/>
            <person name="Tanigami A."/>
            <person name="Fujiwara T."/>
            <person name="Ono T."/>
            <person name="Yamada K."/>
            <person name="Fujii Y."/>
            <person name="Ozaki K."/>
            <person name="Hirao M."/>
            <person name="Ohmori Y."/>
            <person name="Kawabata A."/>
            <person name="Hikiji T."/>
            <person name="Kobatake N."/>
            <person name="Inagaki H."/>
            <person name="Ikema Y."/>
            <person name="Okamoto S."/>
            <person name="Okitani R."/>
            <person name="Kawakami T."/>
            <person name="Noguchi S."/>
            <person name="Itoh T."/>
            <person name="Shigeta K."/>
            <person name="Senba T."/>
            <person name="Matsumura K."/>
            <person name="Nakajima Y."/>
            <person name="Mizuno T."/>
            <person name="Morinaga M."/>
            <person name="Sasaki M."/>
            <person name="Togashi T."/>
            <person name="Oyama M."/>
            <person name="Hata H."/>
            <person name="Watanabe M."/>
            <person name="Komatsu T."/>
            <person name="Mizushima-Sugano J."/>
            <person name="Satoh T."/>
            <person name="Shirai Y."/>
            <person name="Takahashi Y."/>
            <person name="Nakagawa K."/>
            <person name="Okumura K."/>
            <person name="Nagase T."/>
            <person name="Nomura N."/>
            <person name="Kikuchi H."/>
            <person name="Masuho Y."/>
            <person name="Yamashita R."/>
            <person name="Nakai K."/>
            <person name="Yada T."/>
            <person name="Nakamura Y."/>
            <person name="Ohara O."/>
            <person name="Isogai T."/>
            <person name="Sugano S."/>
        </authorList>
    </citation>
    <scope>NUCLEOTIDE SEQUENCE [LARGE SCALE MRNA] (ISOFORM 3)</scope>
    <source>
        <tissue>Adrenal gland</tissue>
        <tissue>Brain</tissue>
        <tissue>Cerebellum</tissue>
    </source>
</reference>
<reference key="2">
    <citation type="journal article" date="2006" name="Nature">
        <title>The DNA sequence, annotation and analysis of human chromosome 3.</title>
        <authorList>
            <person name="Muzny D.M."/>
            <person name="Scherer S.E."/>
            <person name="Kaul R."/>
            <person name="Wang J."/>
            <person name="Yu J."/>
            <person name="Sudbrak R."/>
            <person name="Buhay C.J."/>
            <person name="Chen R."/>
            <person name="Cree A."/>
            <person name="Ding Y."/>
            <person name="Dugan-Rocha S."/>
            <person name="Gill R."/>
            <person name="Gunaratne P."/>
            <person name="Harris R.A."/>
            <person name="Hawes A.C."/>
            <person name="Hernandez J."/>
            <person name="Hodgson A.V."/>
            <person name="Hume J."/>
            <person name="Jackson A."/>
            <person name="Khan Z.M."/>
            <person name="Kovar-Smith C."/>
            <person name="Lewis L.R."/>
            <person name="Lozado R.J."/>
            <person name="Metzker M.L."/>
            <person name="Milosavljevic A."/>
            <person name="Miner G.R."/>
            <person name="Morgan M.B."/>
            <person name="Nazareth L.V."/>
            <person name="Scott G."/>
            <person name="Sodergren E."/>
            <person name="Song X.-Z."/>
            <person name="Steffen D."/>
            <person name="Wei S."/>
            <person name="Wheeler D.A."/>
            <person name="Wright M.W."/>
            <person name="Worley K.C."/>
            <person name="Yuan Y."/>
            <person name="Zhang Z."/>
            <person name="Adams C.Q."/>
            <person name="Ansari-Lari M.A."/>
            <person name="Ayele M."/>
            <person name="Brown M.J."/>
            <person name="Chen G."/>
            <person name="Chen Z."/>
            <person name="Clendenning J."/>
            <person name="Clerc-Blankenburg K.P."/>
            <person name="Chen R."/>
            <person name="Chen Z."/>
            <person name="Davis C."/>
            <person name="Delgado O."/>
            <person name="Dinh H.H."/>
            <person name="Dong W."/>
            <person name="Draper H."/>
            <person name="Ernst S."/>
            <person name="Fu G."/>
            <person name="Gonzalez-Garay M.L."/>
            <person name="Garcia D.K."/>
            <person name="Gillett W."/>
            <person name="Gu J."/>
            <person name="Hao B."/>
            <person name="Haugen E."/>
            <person name="Havlak P."/>
            <person name="He X."/>
            <person name="Hennig S."/>
            <person name="Hu S."/>
            <person name="Huang W."/>
            <person name="Jackson L.R."/>
            <person name="Jacob L.S."/>
            <person name="Kelly S.H."/>
            <person name="Kube M."/>
            <person name="Levy R."/>
            <person name="Li Z."/>
            <person name="Liu B."/>
            <person name="Liu J."/>
            <person name="Liu W."/>
            <person name="Lu J."/>
            <person name="Maheshwari M."/>
            <person name="Nguyen B.-V."/>
            <person name="Okwuonu G.O."/>
            <person name="Palmeiri A."/>
            <person name="Pasternak S."/>
            <person name="Perez L.M."/>
            <person name="Phelps K.A."/>
            <person name="Plopper F.J."/>
            <person name="Qiang B."/>
            <person name="Raymond C."/>
            <person name="Rodriguez R."/>
            <person name="Saenphimmachak C."/>
            <person name="Santibanez J."/>
            <person name="Shen H."/>
            <person name="Shen Y."/>
            <person name="Subramanian S."/>
            <person name="Tabor P.E."/>
            <person name="Verduzco D."/>
            <person name="Waldron L."/>
            <person name="Wang J."/>
            <person name="Wang J."/>
            <person name="Wang Q."/>
            <person name="Williams G.A."/>
            <person name="Wong G.K.-S."/>
            <person name="Yao Z."/>
            <person name="Zhang J."/>
            <person name="Zhang X."/>
            <person name="Zhao G."/>
            <person name="Zhou J."/>
            <person name="Zhou Y."/>
            <person name="Nelson D."/>
            <person name="Lehrach H."/>
            <person name="Reinhardt R."/>
            <person name="Naylor S.L."/>
            <person name="Yang H."/>
            <person name="Olson M."/>
            <person name="Weinstock G."/>
            <person name="Gibbs R.A."/>
        </authorList>
    </citation>
    <scope>NUCLEOTIDE SEQUENCE [LARGE SCALE GENOMIC DNA]</scope>
</reference>
<reference key="3">
    <citation type="journal article" date="2004" name="Hum. Mol. Genet.">
        <title>Filamin C interacts with the muscular dystrophy KY protein and is abnormally distributed in mouse KY deficient muscle fibres.</title>
        <authorList>
            <person name="Beatham J."/>
            <person name="Romero R."/>
            <person name="Townsend S.K.M."/>
            <person name="Hacker T."/>
            <person name="van der Ven P.F.M."/>
            <person name="Blanco G."/>
        </authorList>
    </citation>
    <scope>INTERACTION WITH FLNC AND IGNF1</scope>
</reference>
<reference key="4">
    <citation type="journal article" date="2016" name="Acta Neuropathol.">
        <title>Kyphoscoliosis peptidase (KY) mutation causes a novel congenital myopathy with core targetoid defects.</title>
        <authorList>
            <person name="Straussberg R."/>
            <person name="Schottmann G."/>
            <person name="Sadeh M."/>
            <person name="Gill E."/>
            <person name="Seifert F."/>
            <person name="Halevy A."/>
            <person name="Qassem K."/>
            <person name="Rendu J."/>
            <person name="van der Ven P.F."/>
            <person name="Stenzel W."/>
            <person name="Schuelke M."/>
        </authorList>
    </citation>
    <scope>INVOLVEMENT IN MFM7</scope>
</reference>
<reference key="5">
    <citation type="journal article" date="2016" name="Eur. J. Hum. Genet.">
        <title>A new early-onset neuromuscular disorder associated with kyphoscoliosis peptidase (KY) deficiency.</title>
        <authorList>
            <person name="Hedberg-Oldfors C."/>
            <person name="Darin N."/>
            <person name="Olsson Engman M."/>
            <person name="Orfanos Z."/>
            <person name="Thomsen C."/>
            <person name="van der Ven P.F."/>
            <person name="Oldfors A."/>
        </authorList>
    </citation>
    <scope>TISSUE SPECIFICITY</scope>
    <scope>INVOLVEMENT IN MFM7</scope>
</reference>
<accession>Q8NBH2</accession>
<accession>B7Z1S4</accession>
<accession>Q6ZT15</accession>
<gene>
    <name evidence="8" type="primary">KY</name>
</gene>
<name>KY_HUMAN</name>
<proteinExistence type="evidence at protein level"/>
<dbReference type="EC" id="3.4.-.-" evidence="2"/>
<dbReference type="EMBL" id="AK090526">
    <property type="protein sequence ID" value="BAC03471.1"/>
    <property type="status" value="ALT_SEQ"/>
    <property type="molecule type" value="mRNA"/>
</dbReference>
<dbReference type="EMBL" id="AK126993">
    <property type="protein sequence ID" value="BAC86780.1"/>
    <property type="status" value="ALT_SEQ"/>
    <property type="molecule type" value="mRNA"/>
</dbReference>
<dbReference type="EMBL" id="AK293840">
    <property type="protein sequence ID" value="BAH11610.1"/>
    <property type="molecule type" value="mRNA"/>
</dbReference>
<dbReference type="EMBL" id="AC016931">
    <property type="status" value="NOT_ANNOTATED_CDS"/>
    <property type="molecule type" value="Genomic_DNA"/>
</dbReference>
<dbReference type="EMBL" id="AC109912">
    <property type="status" value="NOT_ANNOTATED_CDS"/>
    <property type="molecule type" value="Genomic_DNA"/>
</dbReference>
<dbReference type="CCDS" id="CCDS46920.1">
    <molecule id="Q8NBH2-4"/>
</dbReference>
<dbReference type="CCDS" id="CCDS93393.1">
    <molecule id="Q8NBH2-3"/>
</dbReference>
<dbReference type="RefSeq" id="NP_001353205.1">
    <molecule id="Q8NBH2-3"/>
    <property type="nucleotide sequence ID" value="NM_001366276.1"/>
</dbReference>
<dbReference type="RefSeq" id="NP_848649.3">
    <molecule id="Q8NBH2-4"/>
    <property type="nucleotide sequence ID" value="NM_178554.4"/>
</dbReference>
<dbReference type="BioGRID" id="130950">
    <property type="interactions" value="2"/>
</dbReference>
<dbReference type="FunCoup" id="Q8NBH2">
    <property type="interactions" value="252"/>
</dbReference>
<dbReference type="STRING" id="9606.ENSP00000397598"/>
<dbReference type="GlyGen" id="Q8NBH2">
    <property type="glycosylation" value="1 site, 1 O-linked glycan (1 site)"/>
</dbReference>
<dbReference type="iPTMnet" id="Q8NBH2"/>
<dbReference type="PhosphoSitePlus" id="Q8NBH2"/>
<dbReference type="BioMuta" id="KY"/>
<dbReference type="DMDM" id="332278189"/>
<dbReference type="MassIVE" id="Q8NBH2"/>
<dbReference type="PeptideAtlas" id="Q8NBH2"/>
<dbReference type="ProteomicsDB" id="72768">
    <molecule id="Q8NBH2-3"/>
</dbReference>
<dbReference type="ProteomicsDB" id="72769">
    <molecule id="Q8NBH2-4"/>
</dbReference>
<dbReference type="Antibodypedia" id="49277">
    <property type="antibodies" value="113 antibodies from 17 providers"/>
</dbReference>
<dbReference type="DNASU" id="339855"/>
<dbReference type="Ensembl" id="ENST00000423778.7">
    <molecule id="Q8NBH2-4"/>
    <property type="protein sequence ID" value="ENSP00000397598.2"/>
    <property type="gene ID" value="ENSG00000174611.12"/>
</dbReference>
<dbReference type="Ensembl" id="ENST00000508956.5">
    <molecule id="Q8NBH2-3"/>
    <property type="protein sequence ID" value="ENSP00000421297.1"/>
    <property type="gene ID" value="ENSG00000174611.12"/>
</dbReference>
<dbReference type="GeneID" id="339855"/>
<dbReference type="KEGG" id="hsa:339855"/>
<dbReference type="MANE-Select" id="ENST00000423778.7">
    <property type="protein sequence ID" value="ENSP00000397598.2"/>
    <property type="RefSeq nucleotide sequence ID" value="NM_178554.6"/>
    <property type="RefSeq protein sequence ID" value="NP_848649.3"/>
</dbReference>
<dbReference type="UCSC" id="uc010hty.4">
    <molecule id="Q8NBH2-4"/>
    <property type="organism name" value="human"/>
</dbReference>
<dbReference type="AGR" id="HGNC:26576"/>
<dbReference type="CTD" id="339855"/>
<dbReference type="DisGeNET" id="339855"/>
<dbReference type="GeneCards" id="KY"/>
<dbReference type="HGNC" id="HGNC:26576">
    <property type="gene designation" value="KY"/>
</dbReference>
<dbReference type="HPA" id="ENSG00000174611">
    <property type="expression patterns" value="Group enriched (skeletal muscle, skin, tongue)"/>
</dbReference>
<dbReference type="MalaCards" id="KY"/>
<dbReference type="MIM" id="605739">
    <property type="type" value="gene"/>
</dbReference>
<dbReference type="MIM" id="617114">
    <property type="type" value="phenotype"/>
</dbReference>
<dbReference type="neXtProt" id="NX_Q8NBH2"/>
<dbReference type="OpenTargets" id="ENSG00000174611"/>
<dbReference type="Orphanet" id="496689">
    <property type="disease" value="Kyphoscoliosis-lateral tongue atrophy-hereditary spastic paraplegia syndrome"/>
</dbReference>
<dbReference type="Orphanet" id="496686">
    <property type="disease" value="Kyphosis-lateral tongue atrophy-myofibrillar myopathy syndrome"/>
</dbReference>
<dbReference type="PharmGKB" id="PA134878738"/>
<dbReference type="VEuPathDB" id="HostDB:ENSG00000174611"/>
<dbReference type="eggNOG" id="KOG4575">
    <property type="taxonomic scope" value="Eukaryota"/>
</dbReference>
<dbReference type="GeneTree" id="ENSGT00390000002887"/>
<dbReference type="HOGENOM" id="CLU_023412_0_0_1"/>
<dbReference type="InParanoid" id="Q8NBH2"/>
<dbReference type="OMA" id="WFTERQG"/>
<dbReference type="OrthoDB" id="6129702at2759"/>
<dbReference type="PAN-GO" id="Q8NBH2">
    <property type="GO annotations" value="3 GO annotations based on evolutionary models"/>
</dbReference>
<dbReference type="TreeFam" id="TF314397"/>
<dbReference type="PathwayCommons" id="Q8NBH2"/>
<dbReference type="SignaLink" id="Q8NBH2"/>
<dbReference type="BioGRID-ORCS" id="339855">
    <property type="hits" value="19 hits in 1146 CRISPR screens"/>
</dbReference>
<dbReference type="ChiTaRS" id="KY">
    <property type="organism name" value="human"/>
</dbReference>
<dbReference type="GenomeRNAi" id="339855"/>
<dbReference type="Pharos" id="Q8NBH2">
    <property type="development level" value="Tbio"/>
</dbReference>
<dbReference type="PRO" id="PR:Q8NBH2"/>
<dbReference type="Proteomes" id="UP000005640">
    <property type="component" value="Chromosome 3"/>
</dbReference>
<dbReference type="RNAct" id="Q8NBH2">
    <property type="molecule type" value="protein"/>
</dbReference>
<dbReference type="Bgee" id="ENSG00000174611">
    <property type="expression patterns" value="Expressed in body of tongue and 143 other cell types or tissues"/>
</dbReference>
<dbReference type="ExpressionAtlas" id="Q8NBH2">
    <property type="expression patterns" value="baseline and differential"/>
</dbReference>
<dbReference type="GO" id="GO:0005737">
    <property type="term" value="C:cytoplasm"/>
    <property type="evidence" value="ECO:0000318"/>
    <property type="project" value="GO_Central"/>
</dbReference>
<dbReference type="GO" id="GO:0005856">
    <property type="term" value="C:cytoskeleton"/>
    <property type="evidence" value="ECO:0007669"/>
    <property type="project" value="UniProtKB-SubCell"/>
</dbReference>
<dbReference type="GO" id="GO:0030018">
    <property type="term" value="C:Z disc"/>
    <property type="evidence" value="ECO:0000250"/>
    <property type="project" value="UniProtKB"/>
</dbReference>
<dbReference type="GO" id="GO:0008233">
    <property type="term" value="F:peptidase activity"/>
    <property type="evidence" value="ECO:0007669"/>
    <property type="project" value="UniProtKB-KW"/>
</dbReference>
<dbReference type="GO" id="GO:0007517">
    <property type="term" value="P:muscle organ development"/>
    <property type="evidence" value="ECO:0000318"/>
    <property type="project" value="GO_Central"/>
</dbReference>
<dbReference type="GO" id="GO:0007528">
    <property type="term" value="P:neuromuscular junction development"/>
    <property type="evidence" value="ECO:0000318"/>
    <property type="project" value="GO_Central"/>
</dbReference>
<dbReference type="GO" id="GO:0006508">
    <property type="term" value="P:proteolysis"/>
    <property type="evidence" value="ECO:0007669"/>
    <property type="project" value="UniProtKB-KW"/>
</dbReference>
<dbReference type="FunFam" id="3.10.620.30:FF:000002">
    <property type="entry name" value="kyphoscoliosis peptidase"/>
    <property type="match status" value="1"/>
</dbReference>
<dbReference type="Gene3D" id="3.10.620.30">
    <property type="match status" value="1"/>
</dbReference>
<dbReference type="InterPro" id="IPR052557">
    <property type="entry name" value="CAP/Cytokinesis_protein"/>
</dbReference>
<dbReference type="InterPro" id="IPR056564">
    <property type="entry name" value="Ig-like_KY"/>
</dbReference>
<dbReference type="InterPro" id="IPR038765">
    <property type="entry name" value="Papain-like_cys_pep_sf"/>
</dbReference>
<dbReference type="InterPro" id="IPR002931">
    <property type="entry name" value="Transglutaminase-like"/>
</dbReference>
<dbReference type="PANTHER" id="PTHR46333">
    <property type="entry name" value="CYTOKINESIS PROTEIN 3"/>
    <property type="match status" value="1"/>
</dbReference>
<dbReference type="PANTHER" id="PTHR46333:SF3">
    <property type="entry name" value="KYPHOSCOLIOSIS PEPTIDASE"/>
    <property type="match status" value="1"/>
</dbReference>
<dbReference type="Pfam" id="PF23265">
    <property type="entry name" value="Ig-like_KY"/>
    <property type="match status" value="2"/>
</dbReference>
<dbReference type="Pfam" id="PF01841">
    <property type="entry name" value="Transglut_core"/>
    <property type="match status" value="1"/>
</dbReference>
<dbReference type="SMART" id="SM00460">
    <property type="entry name" value="TGc"/>
    <property type="match status" value="1"/>
</dbReference>
<dbReference type="SUPFAM" id="SSF54001">
    <property type="entry name" value="Cysteine proteinases"/>
    <property type="match status" value="1"/>
</dbReference>
<evidence type="ECO:0000250" key="1"/>
<evidence type="ECO:0000250" key="2">
    <source>
        <dbReference type="UniProtKB" id="Q8C8H8"/>
    </source>
</evidence>
<evidence type="ECO:0000256" key="3">
    <source>
        <dbReference type="SAM" id="MobiDB-lite"/>
    </source>
</evidence>
<evidence type="ECO:0000269" key="4">
    <source>
    </source>
</evidence>
<evidence type="ECO:0000269" key="5">
    <source>
    </source>
</evidence>
<evidence type="ECO:0000269" key="6">
    <source>
    </source>
</evidence>
<evidence type="ECO:0000305" key="7"/>
<evidence type="ECO:0000312" key="8">
    <source>
        <dbReference type="HGNC" id="HGNC:26576"/>
    </source>
</evidence>
<keyword id="KW-0025">Alternative splicing</keyword>
<keyword id="KW-0963">Cytoplasm</keyword>
<keyword id="KW-0206">Cytoskeleton</keyword>
<keyword id="KW-0378">Hydrolase</keyword>
<keyword id="KW-1060">Myofibrillar myopathy</keyword>
<keyword id="KW-0645">Protease</keyword>
<keyword id="KW-1185">Reference proteome</keyword>
<organism>
    <name type="scientific">Homo sapiens</name>
    <name type="common">Human</name>
    <dbReference type="NCBI Taxonomy" id="9606"/>
    <lineage>
        <taxon>Eukaryota</taxon>
        <taxon>Metazoa</taxon>
        <taxon>Chordata</taxon>
        <taxon>Craniata</taxon>
        <taxon>Vertebrata</taxon>
        <taxon>Euteleostomi</taxon>
        <taxon>Mammalia</taxon>
        <taxon>Eutheria</taxon>
        <taxon>Euarchontoglires</taxon>
        <taxon>Primates</taxon>
        <taxon>Haplorrhini</taxon>
        <taxon>Catarrhini</taxon>
        <taxon>Hominidae</taxon>
        <taxon>Homo</taxon>
    </lineage>
</organism>
<comment type="function">
    <text evidence="1">Probable cytoskeleton-associated protease required for normal muscle growth. Involved in function, maturation and stabilization of the neuromuscular junction. May act by cleaving muscle-specific proteins such as FLNC (By similarity).</text>
</comment>
<comment type="subunit">
    <text evidence="4">Interacts with IGFN1 and FLNC.</text>
</comment>
<comment type="subcellular location">
    <subcellularLocation>
        <location evidence="1">Cytoplasm</location>
        <location evidence="1">Cytoskeleton</location>
    </subcellularLocation>
    <subcellularLocation>
        <location evidence="1">Cytoplasm</location>
        <location evidence="1">Myofibril</location>
        <location evidence="1">Sarcomere</location>
        <location evidence="1">Z line</location>
    </subcellularLocation>
</comment>
<comment type="alternative products">
    <event type="alternative splicing"/>
    <isoform>
        <id>Q8NBH2-4</id>
        <name>4</name>
        <sequence type="displayed"/>
    </isoform>
    <isoform>
        <id>Q8NBH2-3</id>
        <name>3</name>
        <sequence type="described" ref="VSP_060754"/>
    </isoform>
</comment>
<comment type="tissue specificity">
    <text evidence="6">Highly expressed in skeletal muscle.</text>
</comment>
<comment type="disease" evidence="5 6">
    <disease id="DI-04834">
        <name>Myopathy, myofibrillar, 7</name>
        <acronym>MFM7</acronym>
        <description>A form of myofibrillar myopathy, a group of chronic neuromuscular disorders characterized at ultrastructural level by disintegration of the sarcomeric Z disk and myofibrils, and replacement of the normal myofibrillar markings by small dense granules, or larger hyaline masses, or amorphous material. MFM7 is an autosomal recessive form, clinically characterized by early childhood onset of slowly progressive muscle weakness and mild atrophy primarily affecting the lower limbs, associated with joint contractures.</description>
        <dbReference type="MIM" id="617114"/>
    </disease>
    <text>The disease is caused by variants affecting the gene represented in this entry.</text>
</comment>
<comment type="similarity">
    <text evidence="7">Belongs to the transglutaminase-like superfamily.</text>
</comment>
<comment type="sequence caution" evidence="7">
    <conflict type="miscellaneous discrepancy">
        <sequence resource="EMBL-CDS" id="BAC03471"/>
    </conflict>
    <text>Unlikely isoform. Aberrant splice sites.</text>
</comment>
<comment type="sequence caution" evidence="7">
    <conflict type="miscellaneous discrepancy">
        <sequence resource="EMBL-CDS" id="BAC86780"/>
    </conflict>
    <text>Unlikely isoform. Aberrant splice sites.</text>
</comment>
<protein>
    <recommendedName>
        <fullName evidence="7">Kyphoscoliosis peptidase</fullName>
        <ecNumber evidence="2">3.4.-.-</ecNumber>
    </recommendedName>
</protein>
<sequence>MELKKDINAVSIDMLLIVHSEKRRAAQGTLSDQQANPSSLLQRGGGFQGVGNGVRRWQKLEGNDFHENLVEKQHPQQPQVITSYNSQGTQLTVEVHPRDAMPQLLKKFSLAKRLQGDKNGNTRPRQPGGKDAHAYPWDRSSLKSMSLDLQQFEKLDIYASQVTAKSGLDELVSDLLQEAHTDLERVRAIWIWICHHIEYDIAAAQEKDRQAFKPTDILRTQKTNCDGYAGLFERMCRLAGVQCMTVPGYSKGFGYQTGQSFSGEFDHAWNAVYLEGRWHLVDSTWGSGLVDTITSKFTFLYNEFYFLTHPALFIEDHFPDNKNWQLLKPPQSLRQFENNMYHKSEFYNKGMLSAHPETSMIRTVNGKATVTIESCAPTLFMFMLNGKQEHGLLSLRKNGMKLEVYPPTMGTHKLQIFAKGNSDIYSSVLEYTLKCNYVDMGVQLPAELHQPVGPSWFSEQMGIMKPSHPDPIIHTSDGRCSISFSVEEGINVLASLHGDDGPITEETQRRYIFQLHREKQTELKVQLPHAGKFALKIFVKKRQEPGNYIFVFNYLVCCANTKVNWPMFPESFGNWGQDNELLEPLSGVLPANRNVPFKLKLHGIAKVLVKGQDTWPLTLNHEGYWEGSCSTAGCQEVYVMVLENANHNFYSYILKYKVNAQ</sequence>